<protein>
    <recommendedName>
        <fullName evidence="1">Light-independent protochlorophyllide reductase subunit B</fullName>
        <shortName evidence="1">DPOR subunit B</shortName>
        <shortName evidence="1">LI-POR subunit B</shortName>
        <ecNumber evidence="1">1.3.7.7</ecNumber>
    </recommendedName>
</protein>
<accession>B3EP24</accession>
<sequence length="532" mass="58536">MRLAFWLYEGTALHGLSRVTNSMKNVHTVYHAPQGDDYITATYTMLERTPEFPALSISVVRGQDLARGVSRLPGTLQQVEEHYHPEVIVVAPSCSTALLQEDLSQLSMHSGVDTGKILVHDVNPFRVQEHESAEGLFTGLVKRYALEQSTTEKPSVNLLGFTSLGFHLRSDLISLRRILKTLGVEVNVVAPWGAGIEDLRNLPAGWVNVVPYHEMGPGAAHHLREKFGMPSLQGIPMGVNPTLDWIRDLLELLNVIAAEKGLPSIEMPPLTDFSLDGLSAPSGVPWFARTADMESFSGKRAFVFGDATHTVGMVKFLKDELGMQIIGAGTYLEQHADWIRDQLEGYLPVPLMVTDKFQEVAKKIEDEMPELVCGTQMERHSCRKLDVPCMVISTPTHIENHLIGYYPILGFDGADILADRVYTSCKLGLEKHLIDFFGDAGLEYEEEEPESISNGHAAAAGSEGGVPDSGEAGDAGDTDGMPWSPDAEKMLRKVPFFVRKKVRKNTENFARENGEATITAEVFKRAKEALGG</sequence>
<name>BCHB_CHLPB</name>
<organism>
    <name type="scientific">Chlorobium phaeobacteroides (strain BS1)</name>
    <dbReference type="NCBI Taxonomy" id="331678"/>
    <lineage>
        <taxon>Bacteria</taxon>
        <taxon>Pseudomonadati</taxon>
        <taxon>Chlorobiota</taxon>
        <taxon>Chlorobiia</taxon>
        <taxon>Chlorobiales</taxon>
        <taxon>Chlorobiaceae</taxon>
        <taxon>Chlorobium/Pelodictyon group</taxon>
        <taxon>Chlorobium</taxon>
    </lineage>
</organism>
<feature type="chain" id="PRO_1000120525" description="Light-independent protochlorophyllide reductase subunit B">
    <location>
        <begin position="1"/>
        <end position="532"/>
    </location>
</feature>
<feature type="region of interest" description="Disordered" evidence="2">
    <location>
        <begin position="445"/>
        <end position="486"/>
    </location>
</feature>
<feature type="active site" description="Proton donor" evidence="1">
    <location>
        <position position="292"/>
    </location>
</feature>
<feature type="binding site" evidence="1">
    <location>
        <position position="36"/>
    </location>
    <ligand>
        <name>[4Fe-4S] cluster</name>
        <dbReference type="ChEBI" id="CHEBI:49883"/>
        <note>ligand shared with heterodimeric partner</note>
    </ligand>
</feature>
<feature type="binding site" evidence="1">
    <location>
        <begin position="428"/>
        <end position="429"/>
    </location>
    <ligand>
        <name>substrate</name>
    </ligand>
</feature>
<keyword id="KW-0004">4Fe-4S</keyword>
<keyword id="KW-0067">ATP-binding</keyword>
<keyword id="KW-0077">Bacteriochlorophyll biosynthesis</keyword>
<keyword id="KW-0149">Chlorophyll biosynthesis</keyword>
<keyword id="KW-0408">Iron</keyword>
<keyword id="KW-0411">Iron-sulfur</keyword>
<keyword id="KW-0479">Metal-binding</keyword>
<keyword id="KW-0547">Nucleotide-binding</keyword>
<keyword id="KW-0560">Oxidoreductase</keyword>
<keyword id="KW-0602">Photosynthesis</keyword>
<gene>
    <name evidence="1" type="primary">bchB</name>
    <name type="ordered locus">Cphamn1_2259</name>
</gene>
<dbReference type="EC" id="1.3.7.7" evidence="1"/>
<dbReference type="EMBL" id="CP001101">
    <property type="protein sequence ID" value="ACE05163.1"/>
    <property type="molecule type" value="Genomic_DNA"/>
</dbReference>
<dbReference type="SMR" id="B3EP24"/>
<dbReference type="STRING" id="331678.Cphamn1_2259"/>
<dbReference type="KEGG" id="cpb:Cphamn1_2259"/>
<dbReference type="eggNOG" id="COG2710">
    <property type="taxonomic scope" value="Bacteria"/>
</dbReference>
<dbReference type="HOGENOM" id="CLU_025470_0_0_10"/>
<dbReference type="OrthoDB" id="5717231at2"/>
<dbReference type="UniPathway" id="UPA00671"/>
<dbReference type="GO" id="GO:0051539">
    <property type="term" value="F:4 iron, 4 sulfur cluster binding"/>
    <property type="evidence" value="ECO:0007669"/>
    <property type="project" value="UniProtKB-UniRule"/>
</dbReference>
<dbReference type="GO" id="GO:0005524">
    <property type="term" value="F:ATP binding"/>
    <property type="evidence" value="ECO:0007669"/>
    <property type="project" value="UniProtKB-UniRule"/>
</dbReference>
<dbReference type="GO" id="GO:0046872">
    <property type="term" value="F:metal ion binding"/>
    <property type="evidence" value="ECO:0007669"/>
    <property type="project" value="UniProtKB-KW"/>
</dbReference>
<dbReference type="GO" id="GO:0016730">
    <property type="term" value="F:oxidoreductase activity, acting on iron-sulfur proteins as donors"/>
    <property type="evidence" value="ECO:0007669"/>
    <property type="project" value="InterPro"/>
</dbReference>
<dbReference type="GO" id="GO:0016636">
    <property type="term" value="F:oxidoreductase activity, acting on the CH-CH group of donors, iron-sulfur protein as acceptor"/>
    <property type="evidence" value="ECO:0007669"/>
    <property type="project" value="UniProtKB-UniRule"/>
</dbReference>
<dbReference type="GO" id="GO:0036070">
    <property type="term" value="P:light-independent bacteriochlorophyll biosynthetic process"/>
    <property type="evidence" value="ECO:0007669"/>
    <property type="project" value="UniProtKB-UniRule"/>
</dbReference>
<dbReference type="GO" id="GO:0019685">
    <property type="term" value="P:photosynthesis, dark reaction"/>
    <property type="evidence" value="ECO:0007669"/>
    <property type="project" value="InterPro"/>
</dbReference>
<dbReference type="Gene3D" id="1.20.89.20">
    <property type="match status" value="1"/>
</dbReference>
<dbReference type="Gene3D" id="3.40.50.1980">
    <property type="entry name" value="Nitrogenase molybdenum iron protein domain"/>
    <property type="match status" value="3"/>
</dbReference>
<dbReference type="Gene3D" id="1.10.8.550">
    <property type="entry name" value="Proto-chlorophyllide reductase 57 kD subunit B"/>
    <property type="match status" value="1"/>
</dbReference>
<dbReference type="HAMAP" id="MF_00353">
    <property type="entry name" value="ChlB_BchB"/>
    <property type="match status" value="1"/>
</dbReference>
<dbReference type="InterPro" id="IPR050152">
    <property type="entry name" value="ChlB/BchB/BchZ"/>
</dbReference>
<dbReference type="InterPro" id="IPR013580">
    <property type="entry name" value="LI-POR_suB-like_C"/>
</dbReference>
<dbReference type="InterPro" id="IPR000510">
    <property type="entry name" value="Nase/OxRdtase_comp1"/>
</dbReference>
<dbReference type="InterPro" id="IPR042298">
    <property type="entry name" value="P-CP_red_C"/>
</dbReference>
<dbReference type="InterPro" id="IPR005969">
    <property type="entry name" value="Protochl_reductB"/>
</dbReference>
<dbReference type="InterPro" id="IPR016209">
    <property type="entry name" value="Protochlorophyllide_Rdtase"/>
</dbReference>
<dbReference type="NCBIfam" id="TIGR01278">
    <property type="entry name" value="DPOR_BchB"/>
    <property type="match status" value="1"/>
</dbReference>
<dbReference type="NCBIfam" id="NF002789">
    <property type="entry name" value="PRK02910.1-3"/>
    <property type="match status" value="1"/>
</dbReference>
<dbReference type="PANTHER" id="PTHR33712">
    <property type="entry name" value="LIGHT-INDEPENDENT PROTOCHLOROPHYLLIDE REDUCTASE SUBUNIT B"/>
    <property type="match status" value="1"/>
</dbReference>
<dbReference type="PANTHER" id="PTHR33712:SF7">
    <property type="entry name" value="LIGHT-INDEPENDENT PROTOCHLOROPHYLLIDE REDUCTASE SUBUNIT B"/>
    <property type="match status" value="1"/>
</dbReference>
<dbReference type="Pfam" id="PF00148">
    <property type="entry name" value="Oxidored_nitro"/>
    <property type="match status" value="1"/>
</dbReference>
<dbReference type="Pfam" id="PF08369">
    <property type="entry name" value="PCP_red"/>
    <property type="match status" value="1"/>
</dbReference>
<dbReference type="PIRSF" id="PIRSF000163">
    <property type="entry name" value="PCP_ChlB"/>
    <property type="match status" value="1"/>
</dbReference>
<dbReference type="SUPFAM" id="SSF53807">
    <property type="entry name" value="Helical backbone' metal receptor"/>
    <property type="match status" value="1"/>
</dbReference>
<comment type="function">
    <text evidence="1">Component of the dark-operative protochlorophyllide reductase (DPOR) that uses Mg-ATP and reduced ferredoxin to reduce ring D of protochlorophyllide (Pchlide) to form chlorophyllide a (Chlide). This reaction is light-independent. The NB-protein (BchN-BchB) is the catalytic component of the complex.</text>
</comment>
<comment type="catalytic activity">
    <reaction evidence="1">
        <text>chlorophyllide a + oxidized 2[4Fe-4S]-[ferredoxin] + 2 ADP + 2 phosphate = protochlorophyllide a + reduced 2[4Fe-4S]-[ferredoxin] + 2 ATP + 2 H2O</text>
        <dbReference type="Rhea" id="RHEA:28202"/>
        <dbReference type="Rhea" id="RHEA-COMP:10002"/>
        <dbReference type="Rhea" id="RHEA-COMP:10004"/>
        <dbReference type="ChEBI" id="CHEBI:15377"/>
        <dbReference type="ChEBI" id="CHEBI:30616"/>
        <dbReference type="ChEBI" id="CHEBI:33722"/>
        <dbReference type="ChEBI" id="CHEBI:33723"/>
        <dbReference type="ChEBI" id="CHEBI:43474"/>
        <dbReference type="ChEBI" id="CHEBI:83348"/>
        <dbReference type="ChEBI" id="CHEBI:83350"/>
        <dbReference type="ChEBI" id="CHEBI:456216"/>
        <dbReference type="EC" id="1.3.7.7"/>
    </reaction>
</comment>
<comment type="cofactor">
    <cofactor evidence="1">
        <name>[4Fe-4S] cluster</name>
        <dbReference type="ChEBI" id="CHEBI:49883"/>
    </cofactor>
    <text evidence="1">Binds 1 [4Fe-4S] cluster per heterodimer. The cluster is bound at the heterodimer interface by residues from both subunits.</text>
</comment>
<comment type="pathway">
    <text evidence="1">Porphyrin-containing compound metabolism; bacteriochlorophyll biosynthesis (light-independent).</text>
</comment>
<comment type="subunit">
    <text evidence="1">Protochlorophyllide reductase is composed of three subunits; BchL, BchN and BchB. Forms a heterotetramer of two BchB and two BchN subunits.</text>
</comment>
<comment type="similarity">
    <text evidence="1">Belongs to the ChlB/BchB/BchZ family.</text>
</comment>
<proteinExistence type="inferred from homology"/>
<reference key="1">
    <citation type="submission" date="2008-06" db="EMBL/GenBank/DDBJ databases">
        <title>Complete sequence of Chlorobium phaeobacteroides BS1.</title>
        <authorList>
            <consortium name="US DOE Joint Genome Institute"/>
            <person name="Lucas S."/>
            <person name="Copeland A."/>
            <person name="Lapidus A."/>
            <person name="Glavina del Rio T."/>
            <person name="Dalin E."/>
            <person name="Tice H."/>
            <person name="Bruce D."/>
            <person name="Goodwin L."/>
            <person name="Pitluck S."/>
            <person name="Schmutz J."/>
            <person name="Larimer F."/>
            <person name="Land M."/>
            <person name="Hauser L."/>
            <person name="Kyrpides N."/>
            <person name="Ovchinnikova G."/>
            <person name="Li T."/>
            <person name="Liu Z."/>
            <person name="Zhao F."/>
            <person name="Overmann J."/>
            <person name="Bryant D.A."/>
            <person name="Richardson P."/>
        </authorList>
    </citation>
    <scope>NUCLEOTIDE SEQUENCE [LARGE SCALE GENOMIC DNA]</scope>
    <source>
        <strain>BS1</strain>
    </source>
</reference>
<evidence type="ECO:0000255" key="1">
    <source>
        <dbReference type="HAMAP-Rule" id="MF_00353"/>
    </source>
</evidence>
<evidence type="ECO:0000256" key="2">
    <source>
        <dbReference type="SAM" id="MobiDB-lite"/>
    </source>
</evidence>